<evidence type="ECO:0000250" key="1"/>
<evidence type="ECO:0000255" key="2">
    <source>
        <dbReference type="PROSITE-ProRule" id="PRU00175"/>
    </source>
</evidence>
<evidence type="ECO:0000256" key="3">
    <source>
        <dbReference type="SAM" id="MobiDB-lite"/>
    </source>
</evidence>
<dbReference type="EMBL" id="CR382131">
    <property type="protein sequence ID" value="CAG79011.1"/>
    <property type="molecule type" value="Genomic_DNA"/>
</dbReference>
<dbReference type="RefSeq" id="XP_503432.1">
    <property type="nucleotide sequence ID" value="XM_503432.1"/>
</dbReference>
<dbReference type="SMR" id="Q6C7D0"/>
<dbReference type="FunCoup" id="Q6C7D0">
    <property type="interactions" value="538"/>
</dbReference>
<dbReference type="STRING" id="284591.Q6C7D0"/>
<dbReference type="EnsemblFungi" id="CAG79011">
    <property type="protein sequence ID" value="CAG79011"/>
    <property type="gene ID" value="YALI0_E01826g"/>
</dbReference>
<dbReference type="KEGG" id="yli:2912060"/>
<dbReference type="VEuPathDB" id="FungiDB:YALI0_E01826g"/>
<dbReference type="HOGENOM" id="CLU_048466_1_0_1"/>
<dbReference type="InParanoid" id="Q6C7D0"/>
<dbReference type="OMA" id="PNKRDYY"/>
<dbReference type="OrthoDB" id="124958at4891"/>
<dbReference type="Proteomes" id="UP000001300">
    <property type="component" value="Chromosome E"/>
</dbReference>
<dbReference type="GO" id="GO:0005675">
    <property type="term" value="C:transcription factor TFIIH holo complex"/>
    <property type="evidence" value="ECO:0000318"/>
    <property type="project" value="GO_Central"/>
</dbReference>
<dbReference type="GO" id="GO:0070985">
    <property type="term" value="C:transcription factor TFIIK complex"/>
    <property type="evidence" value="ECO:0007669"/>
    <property type="project" value="EnsemblFungi"/>
</dbReference>
<dbReference type="GO" id="GO:0061575">
    <property type="term" value="F:cyclin-dependent protein serine/threonine kinase activator activity"/>
    <property type="evidence" value="ECO:0007669"/>
    <property type="project" value="EnsemblFungi"/>
</dbReference>
<dbReference type="GO" id="GO:0008270">
    <property type="term" value="F:zinc ion binding"/>
    <property type="evidence" value="ECO:0007669"/>
    <property type="project" value="UniProtKB-KW"/>
</dbReference>
<dbReference type="GO" id="GO:0006281">
    <property type="term" value="P:DNA repair"/>
    <property type="evidence" value="ECO:0000318"/>
    <property type="project" value="GO_Central"/>
</dbReference>
<dbReference type="GO" id="GO:0006289">
    <property type="term" value="P:nucleotide-excision repair"/>
    <property type="evidence" value="ECO:0007669"/>
    <property type="project" value="InterPro"/>
</dbReference>
<dbReference type="GO" id="GO:0006357">
    <property type="term" value="P:regulation of transcription by RNA polymerase II"/>
    <property type="evidence" value="ECO:0000318"/>
    <property type="project" value="GO_Central"/>
</dbReference>
<dbReference type="CDD" id="cd16573">
    <property type="entry name" value="RING-HC_TFB3-like"/>
    <property type="match status" value="1"/>
</dbReference>
<dbReference type="FunFam" id="3.30.40.10:FF:000037">
    <property type="entry name" value="Cdk-activating kinase assembly factor MAT1, centre"/>
    <property type="match status" value="1"/>
</dbReference>
<dbReference type="Gene3D" id="3.30.40.10">
    <property type="entry name" value="Zinc/RING finger domain, C3HC4 (zinc finger)"/>
    <property type="match status" value="1"/>
</dbReference>
<dbReference type="InterPro" id="IPR015877">
    <property type="entry name" value="Cdk-activating_kinase_MAT1_cen"/>
</dbReference>
<dbReference type="InterPro" id="IPR004575">
    <property type="entry name" value="MAT1/Tfb3"/>
</dbReference>
<dbReference type="InterPro" id="IPR001841">
    <property type="entry name" value="Znf_RING"/>
</dbReference>
<dbReference type="InterPro" id="IPR013083">
    <property type="entry name" value="Znf_RING/FYVE/PHD"/>
</dbReference>
<dbReference type="InterPro" id="IPR017907">
    <property type="entry name" value="Znf_RING_CS"/>
</dbReference>
<dbReference type="NCBIfam" id="TIGR00570">
    <property type="entry name" value="cdk7"/>
    <property type="match status" value="1"/>
</dbReference>
<dbReference type="PANTHER" id="PTHR12683">
    <property type="entry name" value="CDK-ACTIVATING KINASE ASSEMBLY FACTOR MAT1"/>
    <property type="match status" value="1"/>
</dbReference>
<dbReference type="PANTHER" id="PTHR12683:SF13">
    <property type="entry name" value="CDK-ACTIVATING KINASE ASSEMBLY FACTOR MAT1"/>
    <property type="match status" value="1"/>
</dbReference>
<dbReference type="Pfam" id="PF06391">
    <property type="entry name" value="MAT1"/>
    <property type="match status" value="1"/>
</dbReference>
<dbReference type="Pfam" id="PF17121">
    <property type="entry name" value="zf-C3HC4_5"/>
    <property type="match status" value="1"/>
</dbReference>
<dbReference type="SUPFAM" id="SSF57850">
    <property type="entry name" value="RING/U-box"/>
    <property type="match status" value="1"/>
</dbReference>
<dbReference type="PROSITE" id="PS00518">
    <property type="entry name" value="ZF_RING_1"/>
    <property type="match status" value="1"/>
</dbReference>
<dbReference type="PROSITE" id="PS50089">
    <property type="entry name" value="ZF_RING_2"/>
    <property type="match status" value="1"/>
</dbReference>
<comment type="function">
    <text evidence="1">Acts as a component of the general transcription and DNA repair factor IIH (TFIIH or factor B), which is essential for both basal and activated transcription, and is involved in nucleotide excision repair (NER) of damaged DNA. TFIIH as CTD kinase activity and DNA-dependent ATPase activity, and is essential for polymerase II transcription (By similarity).</text>
</comment>
<comment type="subcellular location">
    <subcellularLocation>
        <location evidence="1">Nucleus</location>
    </subcellularLocation>
</comment>
<organism>
    <name type="scientific">Yarrowia lipolytica (strain CLIB 122 / E 150)</name>
    <name type="common">Yeast</name>
    <name type="synonym">Candida lipolytica</name>
    <dbReference type="NCBI Taxonomy" id="284591"/>
    <lineage>
        <taxon>Eukaryota</taxon>
        <taxon>Fungi</taxon>
        <taxon>Dikarya</taxon>
        <taxon>Ascomycota</taxon>
        <taxon>Saccharomycotina</taxon>
        <taxon>Dipodascomycetes</taxon>
        <taxon>Dipodascales</taxon>
        <taxon>Dipodascales incertae sedis</taxon>
        <taxon>Yarrowia</taxon>
    </lineage>
</organism>
<keyword id="KW-0479">Metal-binding</keyword>
<keyword id="KW-0539">Nucleus</keyword>
<keyword id="KW-1185">Reference proteome</keyword>
<keyword id="KW-0804">Transcription</keyword>
<keyword id="KW-0805">Transcription regulation</keyword>
<keyword id="KW-0862">Zinc</keyword>
<keyword id="KW-0863">Zinc-finger</keyword>
<reference key="1">
    <citation type="journal article" date="2004" name="Nature">
        <title>Genome evolution in yeasts.</title>
        <authorList>
            <person name="Dujon B."/>
            <person name="Sherman D."/>
            <person name="Fischer G."/>
            <person name="Durrens P."/>
            <person name="Casaregola S."/>
            <person name="Lafontaine I."/>
            <person name="de Montigny J."/>
            <person name="Marck C."/>
            <person name="Neuveglise C."/>
            <person name="Talla E."/>
            <person name="Goffard N."/>
            <person name="Frangeul L."/>
            <person name="Aigle M."/>
            <person name="Anthouard V."/>
            <person name="Babour A."/>
            <person name="Barbe V."/>
            <person name="Barnay S."/>
            <person name="Blanchin S."/>
            <person name="Beckerich J.-M."/>
            <person name="Beyne E."/>
            <person name="Bleykasten C."/>
            <person name="Boisrame A."/>
            <person name="Boyer J."/>
            <person name="Cattolico L."/>
            <person name="Confanioleri F."/>
            <person name="de Daruvar A."/>
            <person name="Despons L."/>
            <person name="Fabre E."/>
            <person name="Fairhead C."/>
            <person name="Ferry-Dumazet H."/>
            <person name="Groppi A."/>
            <person name="Hantraye F."/>
            <person name="Hennequin C."/>
            <person name="Jauniaux N."/>
            <person name="Joyet P."/>
            <person name="Kachouri R."/>
            <person name="Kerrest A."/>
            <person name="Koszul R."/>
            <person name="Lemaire M."/>
            <person name="Lesur I."/>
            <person name="Ma L."/>
            <person name="Muller H."/>
            <person name="Nicaud J.-M."/>
            <person name="Nikolski M."/>
            <person name="Oztas S."/>
            <person name="Ozier-Kalogeropoulos O."/>
            <person name="Pellenz S."/>
            <person name="Potier S."/>
            <person name="Richard G.-F."/>
            <person name="Straub M.-L."/>
            <person name="Suleau A."/>
            <person name="Swennen D."/>
            <person name="Tekaia F."/>
            <person name="Wesolowski-Louvel M."/>
            <person name="Westhof E."/>
            <person name="Wirth B."/>
            <person name="Zeniou-Meyer M."/>
            <person name="Zivanovic Y."/>
            <person name="Bolotin-Fukuhara M."/>
            <person name="Thierry A."/>
            <person name="Bouchier C."/>
            <person name="Caudron B."/>
            <person name="Scarpelli C."/>
            <person name="Gaillardin C."/>
            <person name="Weissenbach J."/>
            <person name="Wincker P."/>
            <person name="Souciet J.-L."/>
        </authorList>
    </citation>
    <scope>NUCLEOTIDE SEQUENCE [LARGE SCALE GENOMIC DNA]</scope>
    <source>
        <strain>CLIB 122 / E 150</strain>
    </source>
</reference>
<feature type="chain" id="PRO_0000055941" description="RNA polymerase II transcription factor B subunit 3">
    <location>
        <begin position="1"/>
        <end position="346"/>
    </location>
</feature>
<feature type="zinc finger region" description="RING-type" evidence="2">
    <location>
        <begin position="8"/>
        <end position="53"/>
    </location>
</feature>
<feature type="region of interest" description="Disordered" evidence="3">
    <location>
        <begin position="314"/>
        <end position="346"/>
    </location>
</feature>
<feature type="compositionally biased region" description="Basic and acidic residues" evidence="3">
    <location>
        <begin position="325"/>
        <end position="335"/>
    </location>
</feature>
<proteinExistence type="inferred from homology"/>
<sequence>MSEDGDICPICKSSRYLNPDMKFLVNPQCYHKMCESCVDRLFAYGPVTCPHNGCEKILRKNKFKTQIFEDVAVEKEVDVRQRVMSVMNKREDEFDTLNDYNAYLEKIEDSIFTLLNGTADEKDALTKEIEAYEKEHKAEIIANNKLRDEEDKYEQQKEDWMKEQRKANYLMAVEEQRAAQEDKEAAKRELVHQLATSNKDASSIEQNVQKTALKRSSARTVNFQPMPTSRYFEKVKKESSKPETPFTPFNGDRQIPALFEVQDHYDDKVIEPLAHDIQHQAGGFTLKAAYARILQQAFFGLGVDVQTELLAEENGNSNGTAVPVKTEEDPVKLEEPSIQVKVESTV</sequence>
<gene>
    <name type="primary">TFB3</name>
    <name type="ordered locus">YALI0E01826g</name>
</gene>
<accession>Q6C7D0</accession>
<name>TFB3_YARLI</name>
<protein>
    <recommendedName>
        <fullName>RNA polymerase II transcription factor B subunit 3</fullName>
    </recommendedName>
    <alternativeName>
        <fullName>RNA polymerase II transcription factor B 38 kDa subunit</fullName>
    </alternativeName>
    <alternativeName>
        <fullName>RNA polymerase II transcription factor B p38 subunit</fullName>
    </alternativeName>
</protein>